<sequence>MRTEYCGQLRLSHVGQQVTLCGWVNRRRDLGSLIFIDMRDREGIVQVFFDPDRADALKLASELRNEFCIQVTGTVRARDAKNVNADMATGEIEVLASSLTIINRADSLPLDANHVNTEEARLKYRYLDLRRPEMAQRLKTRAKITSLVRRFMDDHGFLDIETPMLTKATPEGARDYLVPSRVHKGKFYALPQSPQLFKQLLMMSGFDRYYQIVKCFRDEDLRADRQPEFTQIDVETSFMTALQVREVMEALVRHLWLEVKGVDLGDFPVMTFAEAERRYGSDKPDLRNPMELVDVADLLKSVEFAVFAGPANDPKGRVAALRVPGGAQLSRKQIDDYGNFVKIYGAKGLAYIKVNERAKGLDGINSPVAKFLTADIVDAILERTGAQDGDMIFFGADNKKVVADALGALRLKLGKDLSLTDEDKWAPLWVIDFPMFEDDGEGGLTAMHHPFTAPRDMTASELKTAPEEAVANAYDMVINGYEVGGGSVRIHNGEMQQTVFGILGINEQEQREKFGFLLDALKYGTPPHAGLAFGLDRLTMLLTGTDNIRDVIAFPKTTAAACLMTEAPSFANQAALTELGIQVVKKAENN</sequence>
<name>SYD_SALPC</name>
<organism>
    <name type="scientific">Salmonella paratyphi C (strain RKS4594)</name>
    <dbReference type="NCBI Taxonomy" id="476213"/>
    <lineage>
        <taxon>Bacteria</taxon>
        <taxon>Pseudomonadati</taxon>
        <taxon>Pseudomonadota</taxon>
        <taxon>Gammaproteobacteria</taxon>
        <taxon>Enterobacterales</taxon>
        <taxon>Enterobacteriaceae</taxon>
        <taxon>Salmonella</taxon>
    </lineage>
</organism>
<keyword id="KW-0030">Aminoacyl-tRNA synthetase</keyword>
<keyword id="KW-0067">ATP-binding</keyword>
<keyword id="KW-0963">Cytoplasm</keyword>
<keyword id="KW-0436">Ligase</keyword>
<keyword id="KW-0547">Nucleotide-binding</keyword>
<keyword id="KW-0648">Protein biosynthesis</keyword>
<gene>
    <name evidence="1" type="primary">aspS</name>
    <name type="ordered locus">SPC_1812</name>
</gene>
<evidence type="ECO:0000255" key="1">
    <source>
        <dbReference type="HAMAP-Rule" id="MF_00044"/>
    </source>
</evidence>
<reference key="1">
    <citation type="journal article" date="2009" name="PLoS ONE">
        <title>Salmonella paratyphi C: genetic divergence from Salmonella choleraesuis and pathogenic convergence with Salmonella typhi.</title>
        <authorList>
            <person name="Liu W.-Q."/>
            <person name="Feng Y."/>
            <person name="Wang Y."/>
            <person name="Zou Q.-H."/>
            <person name="Chen F."/>
            <person name="Guo J.-T."/>
            <person name="Peng Y.-H."/>
            <person name="Jin Y."/>
            <person name="Li Y.-G."/>
            <person name="Hu S.-N."/>
            <person name="Johnston R.N."/>
            <person name="Liu G.-R."/>
            <person name="Liu S.-L."/>
        </authorList>
    </citation>
    <scope>NUCLEOTIDE SEQUENCE [LARGE SCALE GENOMIC DNA]</scope>
    <source>
        <strain>RKS4594</strain>
    </source>
</reference>
<accession>C0Q2E8</accession>
<comment type="function">
    <text evidence="1">Catalyzes the attachment of L-aspartate to tRNA(Asp) in a two-step reaction: L-aspartate is first activated by ATP to form Asp-AMP and then transferred to the acceptor end of tRNA(Asp).</text>
</comment>
<comment type="catalytic activity">
    <reaction evidence="1">
        <text>tRNA(Asp) + L-aspartate + ATP = L-aspartyl-tRNA(Asp) + AMP + diphosphate</text>
        <dbReference type="Rhea" id="RHEA:19649"/>
        <dbReference type="Rhea" id="RHEA-COMP:9660"/>
        <dbReference type="Rhea" id="RHEA-COMP:9678"/>
        <dbReference type="ChEBI" id="CHEBI:29991"/>
        <dbReference type="ChEBI" id="CHEBI:30616"/>
        <dbReference type="ChEBI" id="CHEBI:33019"/>
        <dbReference type="ChEBI" id="CHEBI:78442"/>
        <dbReference type="ChEBI" id="CHEBI:78516"/>
        <dbReference type="ChEBI" id="CHEBI:456215"/>
        <dbReference type="EC" id="6.1.1.12"/>
    </reaction>
</comment>
<comment type="subunit">
    <text evidence="1">Homodimer.</text>
</comment>
<comment type="subcellular location">
    <subcellularLocation>
        <location evidence="1">Cytoplasm</location>
    </subcellularLocation>
</comment>
<comment type="similarity">
    <text evidence="1">Belongs to the class-II aminoacyl-tRNA synthetase family. Type 1 subfamily.</text>
</comment>
<feature type="chain" id="PRO_1000199008" description="Aspartate--tRNA ligase">
    <location>
        <begin position="1"/>
        <end position="590"/>
    </location>
</feature>
<feature type="region of interest" description="Aspartate" evidence="1">
    <location>
        <begin position="195"/>
        <end position="198"/>
    </location>
</feature>
<feature type="binding site" evidence="1">
    <location>
        <position position="171"/>
    </location>
    <ligand>
        <name>L-aspartate</name>
        <dbReference type="ChEBI" id="CHEBI:29991"/>
    </ligand>
</feature>
<feature type="binding site" evidence="1">
    <location>
        <begin position="217"/>
        <end position="219"/>
    </location>
    <ligand>
        <name>ATP</name>
        <dbReference type="ChEBI" id="CHEBI:30616"/>
    </ligand>
</feature>
<feature type="binding site" evidence="1">
    <location>
        <position position="217"/>
    </location>
    <ligand>
        <name>L-aspartate</name>
        <dbReference type="ChEBI" id="CHEBI:29991"/>
    </ligand>
</feature>
<feature type="binding site" evidence="1">
    <location>
        <position position="226"/>
    </location>
    <ligand>
        <name>ATP</name>
        <dbReference type="ChEBI" id="CHEBI:30616"/>
    </ligand>
</feature>
<feature type="binding site" evidence="1">
    <location>
        <position position="448"/>
    </location>
    <ligand>
        <name>L-aspartate</name>
        <dbReference type="ChEBI" id="CHEBI:29991"/>
    </ligand>
</feature>
<feature type="binding site" evidence="1">
    <location>
        <position position="482"/>
    </location>
    <ligand>
        <name>ATP</name>
        <dbReference type="ChEBI" id="CHEBI:30616"/>
    </ligand>
</feature>
<feature type="binding site" evidence="1">
    <location>
        <position position="489"/>
    </location>
    <ligand>
        <name>L-aspartate</name>
        <dbReference type="ChEBI" id="CHEBI:29991"/>
    </ligand>
</feature>
<feature type="binding site" evidence="1">
    <location>
        <begin position="534"/>
        <end position="537"/>
    </location>
    <ligand>
        <name>ATP</name>
        <dbReference type="ChEBI" id="CHEBI:30616"/>
    </ligand>
</feature>
<protein>
    <recommendedName>
        <fullName evidence="1">Aspartate--tRNA ligase</fullName>
        <ecNumber evidence="1">6.1.1.12</ecNumber>
    </recommendedName>
    <alternativeName>
        <fullName evidence="1">Aspartyl-tRNA synthetase</fullName>
        <shortName evidence="1">AspRS</shortName>
    </alternativeName>
</protein>
<proteinExistence type="inferred from homology"/>
<dbReference type="EC" id="6.1.1.12" evidence="1"/>
<dbReference type="EMBL" id="CP000857">
    <property type="protein sequence ID" value="ACN45951.1"/>
    <property type="molecule type" value="Genomic_DNA"/>
</dbReference>
<dbReference type="RefSeq" id="WP_001258626.1">
    <property type="nucleotide sequence ID" value="NC_012125.1"/>
</dbReference>
<dbReference type="SMR" id="C0Q2E8"/>
<dbReference type="KEGG" id="sei:SPC_1812"/>
<dbReference type="HOGENOM" id="CLU_014330_3_2_6"/>
<dbReference type="Proteomes" id="UP000001599">
    <property type="component" value="Chromosome"/>
</dbReference>
<dbReference type="GO" id="GO:0005737">
    <property type="term" value="C:cytoplasm"/>
    <property type="evidence" value="ECO:0007669"/>
    <property type="project" value="UniProtKB-SubCell"/>
</dbReference>
<dbReference type="GO" id="GO:0004815">
    <property type="term" value="F:aspartate-tRNA ligase activity"/>
    <property type="evidence" value="ECO:0007669"/>
    <property type="project" value="UniProtKB-UniRule"/>
</dbReference>
<dbReference type="GO" id="GO:0005524">
    <property type="term" value="F:ATP binding"/>
    <property type="evidence" value="ECO:0007669"/>
    <property type="project" value="UniProtKB-UniRule"/>
</dbReference>
<dbReference type="GO" id="GO:0003676">
    <property type="term" value="F:nucleic acid binding"/>
    <property type="evidence" value="ECO:0007669"/>
    <property type="project" value="InterPro"/>
</dbReference>
<dbReference type="GO" id="GO:0006422">
    <property type="term" value="P:aspartyl-tRNA aminoacylation"/>
    <property type="evidence" value="ECO:0007669"/>
    <property type="project" value="UniProtKB-UniRule"/>
</dbReference>
<dbReference type="CDD" id="cd00777">
    <property type="entry name" value="AspRS_core"/>
    <property type="match status" value="1"/>
</dbReference>
<dbReference type="CDD" id="cd04317">
    <property type="entry name" value="EcAspRS_like_N"/>
    <property type="match status" value="1"/>
</dbReference>
<dbReference type="FunFam" id="2.40.50.140:FF:000080">
    <property type="entry name" value="Aspartate--tRNA ligase"/>
    <property type="match status" value="1"/>
</dbReference>
<dbReference type="FunFam" id="3.30.1360.30:FF:000001">
    <property type="entry name" value="Aspartate--tRNA ligase"/>
    <property type="match status" value="1"/>
</dbReference>
<dbReference type="Gene3D" id="3.30.930.10">
    <property type="entry name" value="Bira Bifunctional Protein, Domain 2"/>
    <property type="match status" value="1"/>
</dbReference>
<dbReference type="Gene3D" id="3.30.1360.30">
    <property type="entry name" value="GAD-like domain"/>
    <property type="match status" value="1"/>
</dbReference>
<dbReference type="Gene3D" id="2.40.50.140">
    <property type="entry name" value="Nucleic acid-binding proteins"/>
    <property type="match status" value="1"/>
</dbReference>
<dbReference type="HAMAP" id="MF_00044">
    <property type="entry name" value="Asp_tRNA_synth_type1"/>
    <property type="match status" value="1"/>
</dbReference>
<dbReference type="InterPro" id="IPR004364">
    <property type="entry name" value="Aa-tRNA-synt_II"/>
</dbReference>
<dbReference type="InterPro" id="IPR006195">
    <property type="entry name" value="aa-tRNA-synth_II"/>
</dbReference>
<dbReference type="InterPro" id="IPR045864">
    <property type="entry name" value="aa-tRNA-synth_II/BPL/LPL"/>
</dbReference>
<dbReference type="InterPro" id="IPR004524">
    <property type="entry name" value="Asp-tRNA-ligase_1"/>
</dbReference>
<dbReference type="InterPro" id="IPR047089">
    <property type="entry name" value="Asp-tRNA-ligase_1_N"/>
</dbReference>
<dbReference type="InterPro" id="IPR002312">
    <property type="entry name" value="Asp/Asn-tRNA-synth_IIb"/>
</dbReference>
<dbReference type="InterPro" id="IPR047090">
    <property type="entry name" value="AspRS_core"/>
</dbReference>
<dbReference type="InterPro" id="IPR004115">
    <property type="entry name" value="GAD-like_sf"/>
</dbReference>
<dbReference type="InterPro" id="IPR029351">
    <property type="entry name" value="GAD_dom"/>
</dbReference>
<dbReference type="InterPro" id="IPR012340">
    <property type="entry name" value="NA-bd_OB-fold"/>
</dbReference>
<dbReference type="InterPro" id="IPR004365">
    <property type="entry name" value="NA-bd_OB_tRNA"/>
</dbReference>
<dbReference type="NCBIfam" id="TIGR00459">
    <property type="entry name" value="aspS_bact"/>
    <property type="match status" value="1"/>
</dbReference>
<dbReference type="NCBIfam" id="NF001750">
    <property type="entry name" value="PRK00476.1"/>
    <property type="match status" value="1"/>
</dbReference>
<dbReference type="PANTHER" id="PTHR22594:SF5">
    <property type="entry name" value="ASPARTATE--TRNA LIGASE, MITOCHONDRIAL"/>
    <property type="match status" value="1"/>
</dbReference>
<dbReference type="PANTHER" id="PTHR22594">
    <property type="entry name" value="ASPARTYL/LYSYL-TRNA SYNTHETASE"/>
    <property type="match status" value="1"/>
</dbReference>
<dbReference type="Pfam" id="PF02938">
    <property type="entry name" value="GAD"/>
    <property type="match status" value="1"/>
</dbReference>
<dbReference type="Pfam" id="PF00152">
    <property type="entry name" value="tRNA-synt_2"/>
    <property type="match status" value="1"/>
</dbReference>
<dbReference type="Pfam" id="PF01336">
    <property type="entry name" value="tRNA_anti-codon"/>
    <property type="match status" value="1"/>
</dbReference>
<dbReference type="PRINTS" id="PR01042">
    <property type="entry name" value="TRNASYNTHASP"/>
</dbReference>
<dbReference type="SUPFAM" id="SSF55681">
    <property type="entry name" value="Class II aaRS and biotin synthetases"/>
    <property type="match status" value="1"/>
</dbReference>
<dbReference type="SUPFAM" id="SSF55261">
    <property type="entry name" value="GAD domain-like"/>
    <property type="match status" value="1"/>
</dbReference>
<dbReference type="SUPFAM" id="SSF50249">
    <property type="entry name" value="Nucleic acid-binding proteins"/>
    <property type="match status" value="1"/>
</dbReference>
<dbReference type="PROSITE" id="PS50862">
    <property type="entry name" value="AA_TRNA_LIGASE_II"/>
    <property type="match status" value="1"/>
</dbReference>